<comment type="function">
    <text evidence="1">Protamines substitute for histones in the chromatin of sperm during the haploid phase of spermatogenesis. They compact sperm DNA into a highly condensed, stable and inactive complex (By similarity).</text>
</comment>
<comment type="subcellular location">
    <subcellularLocation>
        <location evidence="1">Nucleus</location>
    </subcellularLocation>
    <subcellularLocation>
        <location evidence="1">Chromosome</location>
    </subcellularLocation>
</comment>
<comment type="tissue specificity">
    <text>Testis.</text>
</comment>
<comment type="similarity">
    <text evidence="3">Belongs to the protamine P1 family.</text>
</comment>
<feature type="chain" id="PRO_0000191510" description="Sperm protamine P1">
    <location>
        <begin position="1"/>
        <end position="63"/>
    </location>
</feature>
<feature type="region of interest" description="Disordered" evidence="2">
    <location>
        <begin position="1"/>
        <end position="63"/>
    </location>
</feature>
<dbReference type="EMBL" id="AF001590">
    <property type="protein sequence ID" value="AAB91380.1"/>
    <property type="molecule type" value="Genomic_DNA"/>
</dbReference>
<dbReference type="GO" id="GO:0000786">
    <property type="term" value="C:nucleosome"/>
    <property type="evidence" value="ECO:0007669"/>
    <property type="project" value="UniProtKB-KW"/>
</dbReference>
<dbReference type="GO" id="GO:0005634">
    <property type="term" value="C:nucleus"/>
    <property type="evidence" value="ECO:0007669"/>
    <property type="project" value="UniProtKB-SubCell"/>
</dbReference>
<dbReference type="GO" id="GO:0003677">
    <property type="term" value="F:DNA binding"/>
    <property type="evidence" value="ECO:0007669"/>
    <property type="project" value="UniProtKB-KW"/>
</dbReference>
<dbReference type="GO" id="GO:0030261">
    <property type="term" value="P:chromosome condensation"/>
    <property type="evidence" value="ECO:0007669"/>
    <property type="project" value="UniProtKB-KW"/>
</dbReference>
<dbReference type="GO" id="GO:0035092">
    <property type="term" value="P:sperm DNA condensation"/>
    <property type="evidence" value="ECO:0007669"/>
    <property type="project" value="InterPro"/>
</dbReference>
<dbReference type="InterPro" id="IPR000221">
    <property type="entry name" value="Protamine_P1"/>
</dbReference>
<dbReference type="PROSITE" id="PS00048">
    <property type="entry name" value="PROTAMINE_P1"/>
    <property type="match status" value="1"/>
</dbReference>
<sequence>MARYRRHSRSRSRSRYRRRRRRRSRHHNRRRTYRRSRRHSRRRRGRRRGYSRRRYSRRGRRRY</sequence>
<proteinExistence type="evidence at transcript level"/>
<protein>
    <recommendedName>
        <fullName>Sperm protamine P1</fullName>
    </recommendedName>
</protein>
<keyword id="KW-0158">Chromosome</keyword>
<keyword id="KW-0217">Developmental protein</keyword>
<keyword id="KW-0221">Differentiation</keyword>
<keyword id="KW-0226">DNA condensation</keyword>
<keyword id="KW-0238">DNA-binding</keyword>
<keyword id="KW-0544">Nucleosome core</keyword>
<keyword id="KW-0539">Nucleus</keyword>
<keyword id="KW-0744">Spermatogenesis</keyword>
<gene>
    <name type="primary">PRM1</name>
</gene>
<accession>Q71VP5</accession>
<evidence type="ECO:0000250" key="1"/>
<evidence type="ECO:0000256" key="2">
    <source>
        <dbReference type="SAM" id="MobiDB-lite"/>
    </source>
</evidence>
<evidence type="ECO:0000305" key="3"/>
<reference key="1">
    <citation type="journal article" date="1997" name="Mol. Phylogenet. Evol.">
        <title>A multigene assessment of phylogenetic relationships within the dasyurid marsupial subfamily Sminthopsinae.</title>
        <authorList>
            <person name="Krajewski C."/>
            <person name="Blacket M."/>
            <person name="Buckley L."/>
            <person name="Westerman M."/>
        </authorList>
    </citation>
    <scope>NUCLEOTIDE SEQUENCE [GENOMIC DNA]</scope>
</reference>
<name>HSP1_NINTI</name>
<organism>
    <name type="scientific">Ningaui timealeyi</name>
    <name type="common">Pilbara ningaui</name>
    <dbReference type="NCBI Taxonomy" id="60702"/>
    <lineage>
        <taxon>Eukaryota</taxon>
        <taxon>Metazoa</taxon>
        <taxon>Chordata</taxon>
        <taxon>Craniata</taxon>
        <taxon>Vertebrata</taxon>
        <taxon>Euteleostomi</taxon>
        <taxon>Mammalia</taxon>
        <taxon>Metatheria</taxon>
        <taxon>Dasyuromorphia</taxon>
        <taxon>Dasyuridae</taxon>
        <taxon>Ningaui</taxon>
    </lineage>
</organism>